<gene>
    <name evidence="1" type="primary">nuoI</name>
    <name type="ordered locus">Bxeno_A1236</name>
    <name type="ORF">Bxe_A3206</name>
</gene>
<evidence type="ECO:0000255" key="1">
    <source>
        <dbReference type="HAMAP-Rule" id="MF_01351"/>
    </source>
</evidence>
<feature type="chain" id="PRO_0000250893" description="NADH-quinone oxidoreductase subunit I">
    <location>
        <begin position="1"/>
        <end position="162"/>
    </location>
</feature>
<feature type="domain" description="4Fe-4S ferredoxin-type 1" evidence="1">
    <location>
        <begin position="54"/>
        <end position="83"/>
    </location>
</feature>
<feature type="domain" description="4Fe-4S ferredoxin-type 2" evidence="1">
    <location>
        <begin position="93"/>
        <end position="122"/>
    </location>
</feature>
<feature type="binding site" evidence="1">
    <location>
        <position position="63"/>
    </location>
    <ligand>
        <name>[4Fe-4S] cluster</name>
        <dbReference type="ChEBI" id="CHEBI:49883"/>
        <label>1</label>
    </ligand>
</feature>
<feature type="binding site" evidence="1">
    <location>
        <position position="66"/>
    </location>
    <ligand>
        <name>[4Fe-4S] cluster</name>
        <dbReference type="ChEBI" id="CHEBI:49883"/>
        <label>1</label>
    </ligand>
</feature>
<feature type="binding site" evidence="1">
    <location>
        <position position="69"/>
    </location>
    <ligand>
        <name>[4Fe-4S] cluster</name>
        <dbReference type="ChEBI" id="CHEBI:49883"/>
        <label>1</label>
    </ligand>
</feature>
<feature type="binding site" evidence="1">
    <location>
        <position position="73"/>
    </location>
    <ligand>
        <name>[4Fe-4S] cluster</name>
        <dbReference type="ChEBI" id="CHEBI:49883"/>
        <label>2</label>
    </ligand>
</feature>
<feature type="binding site" evidence="1">
    <location>
        <position position="102"/>
    </location>
    <ligand>
        <name>[4Fe-4S] cluster</name>
        <dbReference type="ChEBI" id="CHEBI:49883"/>
        <label>2</label>
    </ligand>
</feature>
<feature type="binding site" evidence="1">
    <location>
        <position position="105"/>
    </location>
    <ligand>
        <name>[4Fe-4S] cluster</name>
        <dbReference type="ChEBI" id="CHEBI:49883"/>
        <label>2</label>
    </ligand>
</feature>
<feature type="binding site" evidence="1">
    <location>
        <position position="108"/>
    </location>
    <ligand>
        <name>[4Fe-4S] cluster</name>
        <dbReference type="ChEBI" id="CHEBI:49883"/>
        <label>2</label>
    </ligand>
</feature>
<feature type="binding site" evidence="1">
    <location>
        <position position="112"/>
    </location>
    <ligand>
        <name>[4Fe-4S] cluster</name>
        <dbReference type="ChEBI" id="CHEBI:49883"/>
        <label>1</label>
    </ligand>
</feature>
<protein>
    <recommendedName>
        <fullName evidence="1">NADH-quinone oxidoreductase subunit I</fullName>
        <ecNumber evidence="1">7.1.1.-</ecNumber>
    </recommendedName>
    <alternativeName>
        <fullName evidence="1">NADH dehydrogenase I subunit I</fullName>
    </alternativeName>
    <alternativeName>
        <fullName evidence="1">NDH-1 subunit I</fullName>
    </alternativeName>
</protein>
<accession>Q142G5</accession>
<comment type="function">
    <text evidence="1">NDH-1 shuttles electrons from NADH, via FMN and iron-sulfur (Fe-S) centers, to quinones in the respiratory chain. The immediate electron acceptor for the enzyme in this species is believed to be ubiquinone. Couples the redox reaction to proton translocation (for every two electrons transferred, four hydrogen ions are translocated across the cytoplasmic membrane), and thus conserves the redox energy in a proton gradient.</text>
</comment>
<comment type="catalytic activity">
    <reaction evidence="1">
        <text>a quinone + NADH + 5 H(+)(in) = a quinol + NAD(+) + 4 H(+)(out)</text>
        <dbReference type="Rhea" id="RHEA:57888"/>
        <dbReference type="ChEBI" id="CHEBI:15378"/>
        <dbReference type="ChEBI" id="CHEBI:24646"/>
        <dbReference type="ChEBI" id="CHEBI:57540"/>
        <dbReference type="ChEBI" id="CHEBI:57945"/>
        <dbReference type="ChEBI" id="CHEBI:132124"/>
    </reaction>
</comment>
<comment type="cofactor">
    <cofactor evidence="1">
        <name>[4Fe-4S] cluster</name>
        <dbReference type="ChEBI" id="CHEBI:49883"/>
    </cofactor>
    <text evidence="1">Binds 2 [4Fe-4S] clusters per subunit.</text>
</comment>
<comment type="subunit">
    <text evidence="1">NDH-1 is composed of 14 different subunits. Subunits NuoA, H, J, K, L, M, N constitute the membrane sector of the complex.</text>
</comment>
<comment type="subcellular location">
    <subcellularLocation>
        <location evidence="1">Cell inner membrane</location>
        <topology evidence="1">Peripheral membrane protein</topology>
    </subcellularLocation>
</comment>
<comment type="similarity">
    <text evidence="1">Belongs to the complex I 23 kDa subunit family.</text>
</comment>
<sequence length="162" mass="18609">MTAIQNFFKTFFLTELLKGLALTGRYTFQRKVTVQFPEEKTPISPRFRGLHALRRYENGEERCIACKLCEAVCPALAITIESETRADNTRRTTRYDIDLTKCIFCGFCEESCPVDSIVETHILEYHGEKRGDLYFTKDMLLAVGDRYETEIAANKAADAPYR</sequence>
<keyword id="KW-0004">4Fe-4S</keyword>
<keyword id="KW-0997">Cell inner membrane</keyword>
<keyword id="KW-1003">Cell membrane</keyword>
<keyword id="KW-0408">Iron</keyword>
<keyword id="KW-0411">Iron-sulfur</keyword>
<keyword id="KW-0472">Membrane</keyword>
<keyword id="KW-0479">Metal-binding</keyword>
<keyword id="KW-0520">NAD</keyword>
<keyword id="KW-0874">Quinone</keyword>
<keyword id="KW-1185">Reference proteome</keyword>
<keyword id="KW-0677">Repeat</keyword>
<keyword id="KW-1278">Translocase</keyword>
<keyword id="KW-0830">Ubiquinone</keyword>
<dbReference type="EC" id="7.1.1.-" evidence="1"/>
<dbReference type="EMBL" id="CP000270">
    <property type="protein sequence ID" value="ABE29774.1"/>
    <property type="molecule type" value="Genomic_DNA"/>
</dbReference>
<dbReference type="RefSeq" id="WP_007175608.1">
    <property type="nucleotide sequence ID" value="NZ_CP008760.1"/>
</dbReference>
<dbReference type="SMR" id="Q142G5"/>
<dbReference type="STRING" id="266265.Bxe_A3206"/>
<dbReference type="KEGG" id="bxb:DR64_908"/>
<dbReference type="KEGG" id="bxe:Bxe_A3206"/>
<dbReference type="eggNOG" id="COG1143">
    <property type="taxonomic scope" value="Bacteria"/>
</dbReference>
<dbReference type="OrthoDB" id="9808559at2"/>
<dbReference type="Proteomes" id="UP000001817">
    <property type="component" value="Chromosome 1"/>
</dbReference>
<dbReference type="GO" id="GO:0005886">
    <property type="term" value="C:plasma membrane"/>
    <property type="evidence" value="ECO:0007669"/>
    <property type="project" value="UniProtKB-SubCell"/>
</dbReference>
<dbReference type="GO" id="GO:0051539">
    <property type="term" value="F:4 iron, 4 sulfur cluster binding"/>
    <property type="evidence" value="ECO:0007669"/>
    <property type="project" value="UniProtKB-KW"/>
</dbReference>
<dbReference type="GO" id="GO:0005506">
    <property type="term" value="F:iron ion binding"/>
    <property type="evidence" value="ECO:0007669"/>
    <property type="project" value="UniProtKB-UniRule"/>
</dbReference>
<dbReference type="GO" id="GO:0050136">
    <property type="term" value="F:NADH:ubiquinone reductase (non-electrogenic) activity"/>
    <property type="evidence" value="ECO:0007669"/>
    <property type="project" value="UniProtKB-UniRule"/>
</dbReference>
<dbReference type="GO" id="GO:0048038">
    <property type="term" value="F:quinone binding"/>
    <property type="evidence" value="ECO:0007669"/>
    <property type="project" value="UniProtKB-KW"/>
</dbReference>
<dbReference type="GO" id="GO:0009060">
    <property type="term" value="P:aerobic respiration"/>
    <property type="evidence" value="ECO:0007669"/>
    <property type="project" value="TreeGrafter"/>
</dbReference>
<dbReference type="FunFam" id="3.30.70.3270:FF:000003">
    <property type="entry name" value="NADH-quinone oxidoreductase subunit I"/>
    <property type="match status" value="1"/>
</dbReference>
<dbReference type="Gene3D" id="3.30.70.3270">
    <property type="match status" value="1"/>
</dbReference>
<dbReference type="HAMAP" id="MF_01351">
    <property type="entry name" value="NDH1_NuoI"/>
    <property type="match status" value="1"/>
</dbReference>
<dbReference type="InterPro" id="IPR017896">
    <property type="entry name" value="4Fe4S_Fe-S-bd"/>
</dbReference>
<dbReference type="InterPro" id="IPR017900">
    <property type="entry name" value="4Fe4S_Fe_S_CS"/>
</dbReference>
<dbReference type="InterPro" id="IPR010226">
    <property type="entry name" value="NADH_quinone_OxRdtase_chainI"/>
</dbReference>
<dbReference type="NCBIfam" id="TIGR01971">
    <property type="entry name" value="NuoI"/>
    <property type="match status" value="1"/>
</dbReference>
<dbReference type="NCBIfam" id="NF004538">
    <property type="entry name" value="PRK05888.1-4"/>
    <property type="match status" value="1"/>
</dbReference>
<dbReference type="NCBIfam" id="NF004539">
    <property type="entry name" value="PRK05888.1-5"/>
    <property type="match status" value="1"/>
</dbReference>
<dbReference type="PANTHER" id="PTHR10849:SF20">
    <property type="entry name" value="NADH DEHYDROGENASE [UBIQUINONE] IRON-SULFUR PROTEIN 8, MITOCHONDRIAL"/>
    <property type="match status" value="1"/>
</dbReference>
<dbReference type="PANTHER" id="PTHR10849">
    <property type="entry name" value="NADH DEHYDROGENASE UBIQUINONE IRON-SULFUR PROTEIN 8, MITOCHONDRIAL"/>
    <property type="match status" value="1"/>
</dbReference>
<dbReference type="Pfam" id="PF12838">
    <property type="entry name" value="Fer4_7"/>
    <property type="match status" value="1"/>
</dbReference>
<dbReference type="SUPFAM" id="SSF54862">
    <property type="entry name" value="4Fe-4S ferredoxins"/>
    <property type="match status" value="1"/>
</dbReference>
<dbReference type="PROSITE" id="PS00198">
    <property type="entry name" value="4FE4S_FER_1"/>
    <property type="match status" value="2"/>
</dbReference>
<dbReference type="PROSITE" id="PS51379">
    <property type="entry name" value="4FE4S_FER_2"/>
    <property type="match status" value="2"/>
</dbReference>
<organism>
    <name type="scientific">Paraburkholderia xenovorans (strain LB400)</name>
    <dbReference type="NCBI Taxonomy" id="266265"/>
    <lineage>
        <taxon>Bacteria</taxon>
        <taxon>Pseudomonadati</taxon>
        <taxon>Pseudomonadota</taxon>
        <taxon>Betaproteobacteria</taxon>
        <taxon>Burkholderiales</taxon>
        <taxon>Burkholderiaceae</taxon>
        <taxon>Paraburkholderia</taxon>
    </lineage>
</organism>
<name>NUOI_PARXL</name>
<proteinExistence type="inferred from homology"/>
<reference key="1">
    <citation type="journal article" date="2006" name="Proc. Natl. Acad. Sci. U.S.A.">
        <title>Burkholderia xenovorans LB400 harbors a multi-replicon, 9.73-Mbp genome shaped for versatility.</title>
        <authorList>
            <person name="Chain P.S.G."/>
            <person name="Denef V.J."/>
            <person name="Konstantinidis K.T."/>
            <person name="Vergez L.M."/>
            <person name="Agullo L."/>
            <person name="Reyes V.L."/>
            <person name="Hauser L."/>
            <person name="Cordova M."/>
            <person name="Gomez L."/>
            <person name="Gonzalez M."/>
            <person name="Land M."/>
            <person name="Lao V."/>
            <person name="Larimer F."/>
            <person name="LiPuma J.J."/>
            <person name="Mahenthiralingam E."/>
            <person name="Malfatti S.A."/>
            <person name="Marx C.J."/>
            <person name="Parnell J.J."/>
            <person name="Ramette A."/>
            <person name="Richardson P."/>
            <person name="Seeger M."/>
            <person name="Smith D."/>
            <person name="Spilker T."/>
            <person name="Sul W.J."/>
            <person name="Tsoi T.V."/>
            <person name="Ulrich L.E."/>
            <person name="Zhulin I.B."/>
            <person name="Tiedje J.M."/>
        </authorList>
    </citation>
    <scope>NUCLEOTIDE SEQUENCE [LARGE SCALE GENOMIC DNA]</scope>
    <source>
        <strain>LB400</strain>
    </source>
</reference>